<evidence type="ECO:0000250" key="1"/>
<evidence type="ECO:0000305" key="2"/>
<organism>
    <name type="scientific">Oryza sativa subsp. japonica</name>
    <name type="common">Rice</name>
    <dbReference type="NCBI Taxonomy" id="39947"/>
    <lineage>
        <taxon>Eukaryota</taxon>
        <taxon>Viridiplantae</taxon>
        <taxon>Streptophyta</taxon>
        <taxon>Embryophyta</taxon>
        <taxon>Tracheophyta</taxon>
        <taxon>Spermatophyta</taxon>
        <taxon>Magnoliopsida</taxon>
        <taxon>Liliopsida</taxon>
        <taxon>Poales</taxon>
        <taxon>Poaceae</taxon>
        <taxon>BOP clade</taxon>
        <taxon>Oryzoideae</taxon>
        <taxon>Oryzeae</taxon>
        <taxon>Oryzinae</taxon>
        <taxon>Oryza</taxon>
        <taxon>Oryza sativa</taxon>
    </lineage>
</organism>
<proteinExistence type="evidence at transcript level"/>
<reference key="1">
    <citation type="journal article" date="2005" name="Nature">
        <title>The map-based sequence of the rice genome.</title>
        <authorList>
            <consortium name="International rice genome sequencing project (IRGSP)"/>
        </authorList>
    </citation>
    <scope>NUCLEOTIDE SEQUENCE [LARGE SCALE GENOMIC DNA]</scope>
    <source>
        <strain>cv. Nipponbare</strain>
    </source>
</reference>
<reference key="2">
    <citation type="journal article" date="2008" name="Nucleic Acids Res.">
        <title>The rice annotation project database (RAP-DB): 2008 update.</title>
        <authorList>
            <consortium name="The rice annotation project (RAP)"/>
        </authorList>
    </citation>
    <scope>GENOME REANNOTATION</scope>
    <source>
        <strain>cv. Nipponbare</strain>
    </source>
</reference>
<reference key="3">
    <citation type="journal article" date="2013" name="Rice">
        <title>Improvement of the Oryza sativa Nipponbare reference genome using next generation sequence and optical map data.</title>
        <authorList>
            <person name="Kawahara Y."/>
            <person name="de la Bastide M."/>
            <person name="Hamilton J.P."/>
            <person name="Kanamori H."/>
            <person name="McCombie W.R."/>
            <person name="Ouyang S."/>
            <person name="Schwartz D.C."/>
            <person name="Tanaka T."/>
            <person name="Wu J."/>
            <person name="Zhou S."/>
            <person name="Childs K.L."/>
            <person name="Davidson R.M."/>
            <person name="Lin H."/>
            <person name="Quesada-Ocampo L."/>
            <person name="Vaillancourt B."/>
            <person name="Sakai H."/>
            <person name="Lee S.S."/>
            <person name="Kim J."/>
            <person name="Numa H."/>
            <person name="Itoh T."/>
            <person name="Buell C.R."/>
            <person name="Matsumoto T."/>
        </authorList>
    </citation>
    <scope>GENOME REANNOTATION</scope>
    <source>
        <strain>cv. Nipponbare</strain>
    </source>
</reference>
<reference key="4">
    <citation type="journal article" date="2005" name="PLoS Biol.">
        <title>The genomes of Oryza sativa: a history of duplications.</title>
        <authorList>
            <person name="Yu J."/>
            <person name="Wang J."/>
            <person name="Lin W."/>
            <person name="Li S."/>
            <person name="Li H."/>
            <person name="Zhou J."/>
            <person name="Ni P."/>
            <person name="Dong W."/>
            <person name="Hu S."/>
            <person name="Zeng C."/>
            <person name="Zhang J."/>
            <person name="Zhang Y."/>
            <person name="Li R."/>
            <person name="Xu Z."/>
            <person name="Li S."/>
            <person name="Li X."/>
            <person name="Zheng H."/>
            <person name="Cong L."/>
            <person name="Lin L."/>
            <person name="Yin J."/>
            <person name="Geng J."/>
            <person name="Li G."/>
            <person name="Shi J."/>
            <person name="Liu J."/>
            <person name="Lv H."/>
            <person name="Li J."/>
            <person name="Wang J."/>
            <person name="Deng Y."/>
            <person name="Ran L."/>
            <person name="Shi X."/>
            <person name="Wang X."/>
            <person name="Wu Q."/>
            <person name="Li C."/>
            <person name="Ren X."/>
            <person name="Wang J."/>
            <person name="Wang X."/>
            <person name="Li D."/>
            <person name="Liu D."/>
            <person name="Zhang X."/>
            <person name="Ji Z."/>
            <person name="Zhao W."/>
            <person name="Sun Y."/>
            <person name="Zhang Z."/>
            <person name="Bao J."/>
            <person name="Han Y."/>
            <person name="Dong L."/>
            <person name="Ji J."/>
            <person name="Chen P."/>
            <person name="Wu S."/>
            <person name="Liu J."/>
            <person name="Xiao Y."/>
            <person name="Bu D."/>
            <person name="Tan J."/>
            <person name="Yang L."/>
            <person name="Ye C."/>
            <person name="Zhang J."/>
            <person name="Xu J."/>
            <person name="Zhou Y."/>
            <person name="Yu Y."/>
            <person name="Zhang B."/>
            <person name="Zhuang S."/>
            <person name="Wei H."/>
            <person name="Liu B."/>
            <person name="Lei M."/>
            <person name="Yu H."/>
            <person name="Li Y."/>
            <person name="Xu H."/>
            <person name="Wei S."/>
            <person name="He X."/>
            <person name="Fang L."/>
            <person name="Zhang Z."/>
            <person name="Zhang Y."/>
            <person name="Huang X."/>
            <person name="Su Z."/>
            <person name="Tong W."/>
            <person name="Li J."/>
            <person name="Tong Z."/>
            <person name="Li S."/>
            <person name="Ye J."/>
            <person name="Wang L."/>
            <person name="Fang L."/>
            <person name="Lei T."/>
            <person name="Chen C.-S."/>
            <person name="Chen H.-C."/>
            <person name="Xu Z."/>
            <person name="Li H."/>
            <person name="Huang H."/>
            <person name="Zhang F."/>
            <person name="Xu H."/>
            <person name="Li N."/>
            <person name="Zhao C."/>
            <person name="Li S."/>
            <person name="Dong L."/>
            <person name="Huang Y."/>
            <person name="Li L."/>
            <person name="Xi Y."/>
            <person name="Qi Q."/>
            <person name="Li W."/>
            <person name="Zhang B."/>
            <person name="Hu W."/>
            <person name="Zhang Y."/>
            <person name="Tian X."/>
            <person name="Jiao Y."/>
            <person name="Liang X."/>
            <person name="Jin J."/>
            <person name="Gao L."/>
            <person name="Zheng W."/>
            <person name="Hao B."/>
            <person name="Liu S.-M."/>
            <person name="Wang W."/>
            <person name="Yuan L."/>
            <person name="Cao M."/>
            <person name="McDermott J."/>
            <person name="Samudrala R."/>
            <person name="Wang J."/>
            <person name="Wong G.K.-S."/>
            <person name="Yang H."/>
        </authorList>
    </citation>
    <scope>NUCLEOTIDE SEQUENCE [LARGE SCALE GENOMIC DNA]</scope>
    <source>
        <strain>cv. Nipponbare</strain>
    </source>
</reference>
<reference key="5">
    <citation type="journal article" date="2003" name="Science">
        <title>Collection, mapping, and annotation of over 28,000 cDNA clones from japonica rice.</title>
        <authorList>
            <consortium name="The rice full-length cDNA consortium"/>
        </authorList>
    </citation>
    <scope>NUCLEOTIDE SEQUENCE [LARGE SCALE MRNA]</scope>
    <source>
        <strain>cv. Nipponbare</strain>
    </source>
</reference>
<feature type="chain" id="PRO_0000408490" description="Protein LOL4">
    <location>
        <begin position="1"/>
        <end position="147"/>
    </location>
</feature>
<feature type="region of interest" description="Putative zinc finger 1">
    <location>
        <begin position="4"/>
        <end position="34"/>
    </location>
</feature>
<feature type="region of interest" description="Putative zinc finger 2">
    <location>
        <begin position="44"/>
        <end position="74"/>
    </location>
</feature>
<feature type="region of interest" description="Putative zinc finger 3">
    <location>
        <begin position="82"/>
        <end position="112"/>
    </location>
</feature>
<sequence>MQDQLICSGCRRVVQYRRGVAGVCCPGCNTLTAVNPSAVADMSELICSGCPTLLFYNRGASNIRCPSCNRLNSTRSANQIAHLTCGQCRTTLMHPPGASTVQCATCRYVNHVRDARPQTVLVENPKTLDDKGKLVSNVVVGVTSWKR</sequence>
<keyword id="KW-0539">Nucleus</keyword>
<keyword id="KW-1185">Reference proteome</keyword>
<protein>
    <recommendedName>
        <fullName>Protein LOL4</fullName>
    </recommendedName>
    <alternativeName>
        <fullName>Protein LSD ONE LIKE 4</fullName>
        <shortName>OsLOL4</shortName>
    </alternativeName>
    <alternativeName>
        <fullName>Putative zinc finger LOL4</fullName>
    </alternativeName>
</protein>
<name>LOL4_ORYSJ</name>
<dbReference type="EMBL" id="AP004591">
    <property type="protein sequence ID" value="BAC66720.1"/>
    <property type="molecule type" value="Genomic_DNA"/>
</dbReference>
<dbReference type="EMBL" id="AP008214">
    <property type="protein sequence ID" value="BAF22834.1"/>
    <property type="molecule type" value="Genomic_DNA"/>
</dbReference>
<dbReference type="EMBL" id="AP014964">
    <property type="protein sequence ID" value="BAT03692.1"/>
    <property type="molecule type" value="Genomic_DNA"/>
</dbReference>
<dbReference type="EMBL" id="CM000145">
    <property type="protein sequence ID" value="EEE67990.1"/>
    <property type="molecule type" value="Genomic_DNA"/>
</dbReference>
<dbReference type="EMBL" id="AK120454">
    <property type="protein sequence ID" value="BAH00023.1"/>
    <property type="molecule type" value="mRNA"/>
</dbReference>
<dbReference type="RefSeq" id="XP_015648991.1">
    <property type="nucleotide sequence ID" value="XM_015793505.1"/>
</dbReference>
<dbReference type="STRING" id="39947.Q84UR0"/>
<dbReference type="PaxDb" id="39947-Q84UR0"/>
<dbReference type="EnsemblPlants" id="Os08t0130100-01">
    <property type="protein sequence ID" value="Os08t0130100-01"/>
    <property type="gene ID" value="Os08g0130100"/>
</dbReference>
<dbReference type="Gramene" id="Os08t0130100-01">
    <property type="protein sequence ID" value="Os08t0130100-01"/>
    <property type="gene ID" value="Os08g0130100"/>
</dbReference>
<dbReference type="KEGG" id="dosa:Os08g0130100"/>
<dbReference type="eggNOG" id="ENOG502QQTC">
    <property type="taxonomic scope" value="Eukaryota"/>
</dbReference>
<dbReference type="HOGENOM" id="CLU_094017_1_0_1"/>
<dbReference type="InParanoid" id="Q84UR0"/>
<dbReference type="OMA" id="AMSEMIC"/>
<dbReference type="OrthoDB" id="5594417at2759"/>
<dbReference type="Proteomes" id="UP000000763">
    <property type="component" value="Chromosome 8"/>
</dbReference>
<dbReference type="Proteomes" id="UP000007752">
    <property type="component" value="Chromosome 8"/>
</dbReference>
<dbReference type="Proteomes" id="UP000059680">
    <property type="component" value="Chromosome 8"/>
</dbReference>
<dbReference type="GO" id="GO:0005634">
    <property type="term" value="C:nucleus"/>
    <property type="evidence" value="ECO:0007669"/>
    <property type="project" value="UniProtKB-SubCell"/>
</dbReference>
<dbReference type="InterPro" id="IPR040319">
    <property type="entry name" value="LSD1-like"/>
</dbReference>
<dbReference type="InterPro" id="IPR005735">
    <property type="entry name" value="Znf_LSD1"/>
</dbReference>
<dbReference type="NCBIfam" id="TIGR01053">
    <property type="entry name" value="LSD1"/>
    <property type="match status" value="3"/>
</dbReference>
<dbReference type="PANTHER" id="PTHR31747:SF5">
    <property type="entry name" value="PROTEIN LOL4"/>
    <property type="match status" value="1"/>
</dbReference>
<dbReference type="PANTHER" id="PTHR31747">
    <property type="entry name" value="PROTEIN LSD1"/>
    <property type="match status" value="1"/>
</dbReference>
<dbReference type="Pfam" id="PF06943">
    <property type="entry name" value="zf-LSD1"/>
    <property type="match status" value="2"/>
</dbReference>
<gene>
    <name type="primary">LOL4</name>
    <name type="ordered locus">Os08g0130100</name>
    <name type="ordered locus">LOC_Os08g03610</name>
    <name type="ORF">OsJ_25929</name>
    <name type="ORF">P0582D05.124</name>
</gene>
<accession>Q84UR0</accession>
<accession>A0A0P0XBE6</accession>
<comment type="function">
    <text evidence="1">Putative zinc finger that may be involved in programmed cell death and defense response.</text>
</comment>
<comment type="subcellular location">
    <subcellularLocation>
        <location evidence="2">Nucleus</location>
    </subcellularLocation>
</comment>